<protein>
    <recommendedName>
        <fullName evidence="1">Cytochrome b6-f complex subunit 6</fullName>
    </recommendedName>
    <alternativeName>
        <fullName evidence="1">Cytochrome b6-f complex subunit PetL</fullName>
    </alternativeName>
    <alternativeName>
        <fullName evidence="1">Cytochrome b6-f complex subunit VI</fullName>
    </alternativeName>
</protein>
<geneLocation type="chloroplast"/>
<sequence>MLTITSYVGLLFTALGFTLGLYFGLTKVVKLI</sequence>
<evidence type="ECO:0000255" key="1">
    <source>
        <dbReference type="HAMAP-Rule" id="MF_00433"/>
    </source>
</evidence>
<dbReference type="EMBL" id="DQ396875">
    <property type="protein sequence ID" value="ABD48247.1"/>
    <property type="molecule type" value="Genomic_DNA"/>
</dbReference>
<dbReference type="RefSeq" id="YP_635964.1">
    <property type="nucleotide sequence ID" value="NC_008101.1"/>
</dbReference>
<dbReference type="SMR" id="Q1KVW0"/>
<dbReference type="GeneID" id="4099746"/>
<dbReference type="GO" id="GO:0009535">
    <property type="term" value="C:chloroplast thylakoid membrane"/>
    <property type="evidence" value="ECO:0007669"/>
    <property type="project" value="UniProtKB-SubCell"/>
</dbReference>
<dbReference type="GO" id="GO:0009512">
    <property type="term" value="C:cytochrome b6f complex"/>
    <property type="evidence" value="ECO:0007669"/>
    <property type="project" value="InterPro"/>
</dbReference>
<dbReference type="GO" id="GO:0045158">
    <property type="term" value="F:electron transporter, transferring electrons within cytochrome b6/f complex of photosystem II activity"/>
    <property type="evidence" value="ECO:0007669"/>
    <property type="project" value="UniProtKB-UniRule"/>
</dbReference>
<dbReference type="GO" id="GO:0015979">
    <property type="term" value="P:photosynthesis"/>
    <property type="evidence" value="ECO:0007669"/>
    <property type="project" value="UniProtKB-KW"/>
</dbReference>
<dbReference type="HAMAP" id="MF_00433">
    <property type="entry name" value="Cytb6_f_PetL"/>
    <property type="match status" value="1"/>
</dbReference>
<dbReference type="InterPro" id="IPR007802">
    <property type="entry name" value="Cyt_b6/f_cplx_su6"/>
</dbReference>
<dbReference type="Pfam" id="PF05115">
    <property type="entry name" value="PetL"/>
    <property type="match status" value="1"/>
</dbReference>
<dbReference type="SUPFAM" id="SSF103436">
    <property type="entry name" value="PetL subunit of the cytochrome b6f complex"/>
    <property type="match status" value="1"/>
</dbReference>
<reference key="1">
    <citation type="journal article" date="2006" name="BMC Evol. Biol.">
        <title>The complete chloroplast genome sequence of the chlorophycean green alga Scenedesmus obliquus reveals a compact gene organization and a biased distribution of genes on the two DNA strands.</title>
        <authorList>
            <person name="de Cambiaire J.-C."/>
            <person name="Otis C."/>
            <person name="Lemieux C."/>
            <person name="Turmel M."/>
        </authorList>
    </citation>
    <scope>NUCLEOTIDE SEQUENCE [LARGE SCALE GENOMIC DNA]</scope>
    <source>
        <strain>UTEX 393</strain>
    </source>
</reference>
<comment type="function">
    <text evidence="1">Component of the cytochrome b6-f complex, which mediates electron transfer between photosystem II (PSII) and photosystem I (PSI), cyclic electron flow around PSI, and state transitions. PetL is important for photoautotrophic growth as well as for electron transfer efficiency and stability of the cytochrome b6-f complex.</text>
</comment>
<comment type="subunit">
    <text evidence="1">The 4 large subunits of the cytochrome b6-f complex are cytochrome b6, subunit IV (17 kDa polypeptide, PetD), cytochrome f and the Rieske protein, while the 4 small subunits are PetG, PetL, PetM and PetN. The complex functions as a dimer.</text>
</comment>
<comment type="subcellular location">
    <subcellularLocation>
        <location evidence="1">Plastid</location>
        <location evidence="1">Chloroplast thylakoid membrane</location>
        <topology evidence="1">Single-pass membrane protein</topology>
    </subcellularLocation>
</comment>
<comment type="similarity">
    <text evidence="1">Belongs to the PetL family.</text>
</comment>
<keyword id="KW-0150">Chloroplast</keyword>
<keyword id="KW-0249">Electron transport</keyword>
<keyword id="KW-0472">Membrane</keyword>
<keyword id="KW-0602">Photosynthesis</keyword>
<keyword id="KW-0934">Plastid</keyword>
<keyword id="KW-0793">Thylakoid</keyword>
<keyword id="KW-0812">Transmembrane</keyword>
<keyword id="KW-1133">Transmembrane helix</keyword>
<keyword id="KW-0813">Transport</keyword>
<proteinExistence type="inferred from homology"/>
<accession>Q1KVW0</accession>
<gene>
    <name evidence="1" type="primary">petL</name>
</gene>
<organism>
    <name type="scientific">Tetradesmus obliquus</name>
    <name type="common">Green alga</name>
    <name type="synonym">Acutodesmus obliquus</name>
    <dbReference type="NCBI Taxonomy" id="3088"/>
    <lineage>
        <taxon>Eukaryota</taxon>
        <taxon>Viridiplantae</taxon>
        <taxon>Chlorophyta</taxon>
        <taxon>core chlorophytes</taxon>
        <taxon>Chlorophyceae</taxon>
        <taxon>CS clade</taxon>
        <taxon>Sphaeropleales</taxon>
        <taxon>Scenedesmaceae</taxon>
        <taxon>Tetradesmus</taxon>
    </lineage>
</organism>
<feature type="chain" id="PRO_0000275534" description="Cytochrome b6-f complex subunit 6">
    <location>
        <begin position="1"/>
        <end position="32"/>
    </location>
</feature>
<feature type="transmembrane region" description="Helical" evidence="1">
    <location>
        <begin position="4"/>
        <end position="26"/>
    </location>
</feature>
<name>PETL_TETOB</name>